<accession>Q9UUB0</accession>
<protein>
    <recommendedName>
        <fullName evidence="4">Small ribosomal subunit protein uS17m</fullName>
    </recommendedName>
    <alternativeName>
        <fullName>37S ribosomal protein S17, mitochondrial</fullName>
    </alternativeName>
</protein>
<sequence>MKLNYVGIVISRAMPKTAKVRVAKEKFHPVVKKYVTQYQNYMVQDDLNCNVGDAVTIQPCRPRSATKRFEIIKILSTANRMSPASEISKE</sequence>
<evidence type="ECO:0000250" key="1">
    <source>
        <dbReference type="UniProtKB" id="Q03246"/>
    </source>
</evidence>
<evidence type="ECO:0000255" key="2"/>
<evidence type="ECO:0000269" key="3">
    <source>
    </source>
</evidence>
<evidence type="ECO:0000305" key="4"/>
<evidence type="ECO:0000312" key="5">
    <source>
        <dbReference type="EMBL" id="CAB52616.1"/>
    </source>
</evidence>
<gene>
    <name evidence="5" type="primary">mrps17</name>
    <name type="ORF">SPBC409.14c</name>
</gene>
<dbReference type="EMBL" id="CU329671">
    <property type="protein sequence ID" value="CAB52616.1"/>
    <property type="molecule type" value="Genomic_DNA"/>
</dbReference>
<dbReference type="PIR" id="T40441">
    <property type="entry name" value="T40441"/>
</dbReference>
<dbReference type="RefSeq" id="NP_595464.1">
    <property type="nucleotide sequence ID" value="NM_001021374.2"/>
</dbReference>
<dbReference type="SMR" id="Q9UUB0"/>
<dbReference type="BioGRID" id="277294">
    <property type="interactions" value="11"/>
</dbReference>
<dbReference type="ComplexPortal" id="CPX-10315">
    <property type="entry name" value="37S mitochondrial small ribosomal subunit"/>
</dbReference>
<dbReference type="FunCoup" id="Q9UUB0">
    <property type="interactions" value="214"/>
</dbReference>
<dbReference type="STRING" id="284812.Q9UUB0"/>
<dbReference type="PaxDb" id="4896-SPBC409.14c.1"/>
<dbReference type="EnsemblFungi" id="SPBC409.14c.1">
    <property type="protein sequence ID" value="SPBC409.14c.1:pep"/>
    <property type="gene ID" value="SPBC409.14c"/>
</dbReference>
<dbReference type="GeneID" id="2540774"/>
<dbReference type="KEGG" id="spo:2540774"/>
<dbReference type="PomBase" id="SPBC409.14c">
    <property type="gene designation" value="mrps17"/>
</dbReference>
<dbReference type="VEuPathDB" id="FungiDB:SPBC409.14c"/>
<dbReference type="eggNOG" id="KOG1740">
    <property type="taxonomic scope" value="Eukaryota"/>
</dbReference>
<dbReference type="HOGENOM" id="CLU_073626_1_2_1"/>
<dbReference type="InParanoid" id="Q9UUB0"/>
<dbReference type="OMA" id="QNHCNIG"/>
<dbReference type="PhylomeDB" id="Q9UUB0"/>
<dbReference type="PRO" id="PR:Q9UUB0"/>
<dbReference type="Proteomes" id="UP000002485">
    <property type="component" value="Chromosome II"/>
</dbReference>
<dbReference type="GO" id="GO:0005763">
    <property type="term" value="C:mitochondrial small ribosomal subunit"/>
    <property type="evidence" value="ECO:0000250"/>
    <property type="project" value="PomBase"/>
</dbReference>
<dbReference type="GO" id="GO:0005739">
    <property type="term" value="C:mitochondrion"/>
    <property type="evidence" value="ECO:0007005"/>
    <property type="project" value="PomBase"/>
</dbReference>
<dbReference type="GO" id="GO:0019843">
    <property type="term" value="F:rRNA binding"/>
    <property type="evidence" value="ECO:0007669"/>
    <property type="project" value="UniProtKB-KW"/>
</dbReference>
<dbReference type="GO" id="GO:0003735">
    <property type="term" value="F:structural constituent of ribosome"/>
    <property type="evidence" value="ECO:0000318"/>
    <property type="project" value="GO_Central"/>
</dbReference>
<dbReference type="GO" id="GO:0032543">
    <property type="term" value="P:mitochondrial translation"/>
    <property type="evidence" value="ECO:0000250"/>
    <property type="project" value="PomBase"/>
</dbReference>
<dbReference type="CDD" id="cd00364">
    <property type="entry name" value="Ribosomal_uS17"/>
    <property type="match status" value="1"/>
</dbReference>
<dbReference type="Gene3D" id="2.40.50.140">
    <property type="entry name" value="Nucleic acid-binding proteins"/>
    <property type="match status" value="1"/>
</dbReference>
<dbReference type="InterPro" id="IPR012340">
    <property type="entry name" value="NA-bd_OB-fold"/>
</dbReference>
<dbReference type="InterPro" id="IPR000266">
    <property type="entry name" value="Ribosomal_uS17"/>
</dbReference>
<dbReference type="PANTHER" id="PTHR10744">
    <property type="entry name" value="40S RIBOSOMAL PROTEIN S11 FAMILY MEMBER"/>
    <property type="match status" value="1"/>
</dbReference>
<dbReference type="PANTHER" id="PTHR10744:SF1">
    <property type="entry name" value="SMALL RIBOSOMAL SUBUNIT PROTEIN US17M"/>
    <property type="match status" value="1"/>
</dbReference>
<dbReference type="Pfam" id="PF00366">
    <property type="entry name" value="Ribosomal_S17"/>
    <property type="match status" value="1"/>
</dbReference>
<dbReference type="PRINTS" id="PR00973">
    <property type="entry name" value="RIBOSOMALS17"/>
</dbReference>
<dbReference type="SUPFAM" id="SSF50249">
    <property type="entry name" value="Nucleic acid-binding proteins"/>
    <property type="match status" value="1"/>
</dbReference>
<proteinExistence type="inferred from homology"/>
<organism>
    <name type="scientific">Schizosaccharomyces pombe (strain 972 / ATCC 24843)</name>
    <name type="common">Fission yeast</name>
    <dbReference type="NCBI Taxonomy" id="284812"/>
    <lineage>
        <taxon>Eukaryota</taxon>
        <taxon>Fungi</taxon>
        <taxon>Dikarya</taxon>
        <taxon>Ascomycota</taxon>
        <taxon>Taphrinomycotina</taxon>
        <taxon>Schizosaccharomycetes</taxon>
        <taxon>Schizosaccharomycetales</taxon>
        <taxon>Schizosaccharomycetaceae</taxon>
        <taxon>Schizosaccharomyces</taxon>
    </lineage>
</organism>
<feature type="chain" id="PRO_0000311716" description="Small ribosomal subunit protein uS17m">
    <location>
        <begin position="1"/>
        <end position="90"/>
    </location>
</feature>
<name>RT17_SCHPO</name>
<keyword id="KW-0496">Mitochondrion</keyword>
<keyword id="KW-1185">Reference proteome</keyword>
<keyword id="KW-0687">Ribonucleoprotein</keyword>
<keyword id="KW-0689">Ribosomal protein</keyword>
<keyword id="KW-0694">RNA-binding</keyword>
<keyword id="KW-0699">rRNA-binding</keyword>
<reference evidence="5" key="1">
    <citation type="journal article" date="2002" name="Nature">
        <title>The genome sequence of Schizosaccharomyces pombe.</title>
        <authorList>
            <person name="Wood V."/>
            <person name="Gwilliam R."/>
            <person name="Rajandream M.A."/>
            <person name="Lyne M.H."/>
            <person name="Lyne R."/>
            <person name="Stewart A."/>
            <person name="Sgouros J.G."/>
            <person name="Peat N."/>
            <person name="Hayles J."/>
            <person name="Baker S.G."/>
            <person name="Basham D."/>
            <person name="Bowman S."/>
            <person name="Brooks K."/>
            <person name="Brown D."/>
            <person name="Brown S."/>
            <person name="Chillingworth T."/>
            <person name="Churcher C.M."/>
            <person name="Collins M."/>
            <person name="Connor R."/>
            <person name="Cronin A."/>
            <person name="Davis P."/>
            <person name="Feltwell T."/>
            <person name="Fraser A."/>
            <person name="Gentles S."/>
            <person name="Goble A."/>
            <person name="Hamlin N."/>
            <person name="Harris D.E."/>
            <person name="Hidalgo J."/>
            <person name="Hodgson G."/>
            <person name="Holroyd S."/>
            <person name="Hornsby T."/>
            <person name="Howarth S."/>
            <person name="Huckle E.J."/>
            <person name="Hunt S."/>
            <person name="Jagels K."/>
            <person name="James K.D."/>
            <person name="Jones L."/>
            <person name="Jones M."/>
            <person name="Leather S."/>
            <person name="McDonald S."/>
            <person name="McLean J."/>
            <person name="Mooney P."/>
            <person name="Moule S."/>
            <person name="Mungall K.L."/>
            <person name="Murphy L.D."/>
            <person name="Niblett D."/>
            <person name="Odell C."/>
            <person name="Oliver K."/>
            <person name="O'Neil S."/>
            <person name="Pearson D."/>
            <person name="Quail M.A."/>
            <person name="Rabbinowitsch E."/>
            <person name="Rutherford K.M."/>
            <person name="Rutter S."/>
            <person name="Saunders D."/>
            <person name="Seeger K."/>
            <person name="Sharp S."/>
            <person name="Skelton J."/>
            <person name="Simmonds M.N."/>
            <person name="Squares R."/>
            <person name="Squares S."/>
            <person name="Stevens K."/>
            <person name="Taylor K."/>
            <person name="Taylor R.G."/>
            <person name="Tivey A."/>
            <person name="Walsh S.V."/>
            <person name="Warren T."/>
            <person name="Whitehead S."/>
            <person name="Woodward J.R."/>
            <person name="Volckaert G."/>
            <person name="Aert R."/>
            <person name="Robben J."/>
            <person name="Grymonprez B."/>
            <person name="Weltjens I."/>
            <person name="Vanstreels E."/>
            <person name="Rieger M."/>
            <person name="Schaefer M."/>
            <person name="Mueller-Auer S."/>
            <person name="Gabel C."/>
            <person name="Fuchs M."/>
            <person name="Duesterhoeft A."/>
            <person name="Fritzc C."/>
            <person name="Holzer E."/>
            <person name="Moestl D."/>
            <person name="Hilbert H."/>
            <person name="Borzym K."/>
            <person name="Langer I."/>
            <person name="Beck A."/>
            <person name="Lehrach H."/>
            <person name="Reinhardt R."/>
            <person name="Pohl T.M."/>
            <person name="Eger P."/>
            <person name="Zimmermann W."/>
            <person name="Wedler H."/>
            <person name="Wambutt R."/>
            <person name="Purnelle B."/>
            <person name="Goffeau A."/>
            <person name="Cadieu E."/>
            <person name="Dreano S."/>
            <person name="Gloux S."/>
            <person name="Lelaure V."/>
            <person name="Mottier S."/>
            <person name="Galibert F."/>
            <person name="Aves S.J."/>
            <person name="Xiang Z."/>
            <person name="Hunt C."/>
            <person name="Moore K."/>
            <person name="Hurst S.M."/>
            <person name="Lucas M."/>
            <person name="Rochet M."/>
            <person name="Gaillardin C."/>
            <person name="Tallada V.A."/>
            <person name="Garzon A."/>
            <person name="Thode G."/>
            <person name="Daga R.R."/>
            <person name="Cruzado L."/>
            <person name="Jimenez J."/>
            <person name="Sanchez M."/>
            <person name="del Rey F."/>
            <person name="Benito J."/>
            <person name="Dominguez A."/>
            <person name="Revuelta J.L."/>
            <person name="Moreno S."/>
            <person name="Armstrong J."/>
            <person name="Forsburg S.L."/>
            <person name="Cerutti L."/>
            <person name="Lowe T."/>
            <person name="McCombie W.R."/>
            <person name="Paulsen I."/>
            <person name="Potashkin J."/>
            <person name="Shpakovski G.V."/>
            <person name="Ussery D."/>
            <person name="Barrell B.G."/>
            <person name="Nurse P."/>
        </authorList>
    </citation>
    <scope>NUCLEOTIDE SEQUENCE [LARGE SCALE GENOMIC DNA]</scope>
    <source>
        <strain>972 / ATCC 24843</strain>
    </source>
</reference>
<reference evidence="4" key="2">
    <citation type="journal article" date="2006" name="Nat. Biotechnol.">
        <title>ORFeome cloning and global analysis of protein localization in the fission yeast Schizosaccharomyces pombe.</title>
        <authorList>
            <person name="Matsuyama A."/>
            <person name="Arai R."/>
            <person name="Yashiroda Y."/>
            <person name="Shirai A."/>
            <person name="Kamata A."/>
            <person name="Sekido S."/>
            <person name="Kobayashi Y."/>
            <person name="Hashimoto A."/>
            <person name="Hamamoto M."/>
            <person name="Hiraoka Y."/>
            <person name="Horinouchi S."/>
            <person name="Yoshida M."/>
        </authorList>
    </citation>
    <scope>SUBCELLULAR LOCATION [LARGE SCALE ANALYSIS]</scope>
</reference>
<comment type="function">
    <text evidence="1">Component of the mitochondrial ribosome (mitoribosome), a dedicated translation machinery responsible for the synthesis of mitochondrial genome-encoded proteins, including at least some of the essential transmembrane subunits of the mitochondrial respiratory chain. The mitoribosomes are attached to the mitochondrial inner membrane and translation products are cotranslationally integrated into the membrane. uS17m may have a meiosis-specific role as it accumulates during the middle stage of sporulation.</text>
</comment>
<comment type="subunit">
    <text evidence="1">Component of the mitochondrial small ribosomal subunit (mt-SSU). Mature yeast 74S mitochondrial ribosomes consist of a small (37S) and a large (54S) subunit. The 37S small subunit contains a 15S ribosomal RNA (15S mt-rRNA) and at least 32 different proteins. The 54S large subunit contains a 21S rRNA (21S mt-rRNA) and at least 45 different proteins.</text>
</comment>
<comment type="subcellular location">
    <subcellularLocation>
        <location evidence="3">Mitochondrion</location>
    </subcellularLocation>
</comment>
<comment type="similarity">
    <text evidence="2">Belongs to the universal ribosomal protein uS17 family.</text>
</comment>